<dbReference type="EC" id="2.7.1.35" evidence="1"/>
<dbReference type="EMBL" id="CP000020">
    <property type="protein sequence ID" value="AAW86551.1"/>
    <property type="molecule type" value="Genomic_DNA"/>
</dbReference>
<dbReference type="RefSeq" id="WP_011262524.1">
    <property type="nucleotide sequence ID" value="NC_006840.2"/>
</dbReference>
<dbReference type="RefSeq" id="YP_205439.1">
    <property type="nucleotide sequence ID" value="NC_006840.2"/>
</dbReference>
<dbReference type="SMR" id="Q5E345"/>
<dbReference type="STRING" id="312309.VF_2056"/>
<dbReference type="EnsemblBacteria" id="AAW86551">
    <property type="protein sequence ID" value="AAW86551"/>
    <property type="gene ID" value="VF_2056"/>
</dbReference>
<dbReference type="GeneID" id="54164762"/>
<dbReference type="KEGG" id="vfi:VF_2056"/>
<dbReference type="PATRIC" id="fig|312309.11.peg.2096"/>
<dbReference type="eggNOG" id="COG2240">
    <property type="taxonomic scope" value="Bacteria"/>
</dbReference>
<dbReference type="HOGENOM" id="CLU_046496_3_0_6"/>
<dbReference type="OrthoDB" id="9800808at2"/>
<dbReference type="UniPathway" id="UPA01068">
    <property type="reaction ID" value="UER00298"/>
</dbReference>
<dbReference type="Proteomes" id="UP000000537">
    <property type="component" value="Chromosome I"/>
</dbReference>
<dbReference type="GO" id="GO:0005829">
    <property type="term" value="C:cytosol"/>
    <property type="evidence" value="ECO:0007669"/>
    <property type="project" value="TreeGrafter"/>
</dbReference>
<dbReference type="GO" id="GO:0005524">
    <property type="term" value="F:ATP binding"/>
    <property type="evidence" value="ECO:0007669"/>
    <property type="project" value="UniProtKB-UniRule"/>
</dbReference>
<dbReference type="GO" id="GO:0000287">
    <property type="term" value="F:magnesium ion binding"/>
    <property type="evidence" value="ECO:0007669"/>
    <property type="project" value="UniProtKB-UniRule"/>
</dbReference>
<dbReference type="GO" id="GO:0008478">
    <property type="term" value="F:pyridoxal kinase activity"/>
    <property type="evidence" value="ECO:0007669"/>
    <property type="project" value="UniProtKB-UniRule"/>
</dbReference>
<dbReference type="GO" id="GO:0009443">
    <property type="term" value="P:pyridoxal 5'-phosphate salvage"/>
    <property type="evidence" value="ECO:0007669"/>
    <property type="project" value="UniProtKB-UniRule"/>
</dbReference>
<dbReference type="CDD" id="cd01173">
    <property type="entry name" value="pyridoxal_pyridoxamine_kinase"/>
    <property type="match status" value="1"/>
</dbReference>
<dbReference type="FunFam" id="3.40.1190.20:FF:000008">
    <property type="entry name" value="Pyridoxal kinase PdxY"/>
    <property type="match status" value="1"/>
</dbReference>
<dbReference type="Gene3D" id="3.40.1190.20">
    <property type="match status" value="1"/>
</dbReference>
<dbReference type="HAMAP" id="MF_01639">
    <property type="entry name" value="PdxY"/>
    <property type="match status" value="1"/>
</dbReference>
<dbReference type="InterPro" id="IPR013749">
    <property type="entry name" value="PM/HMP-P_kinase-1"/>
</dbReference>
<dbReference type="InterPro" id="IPR004625">
    <property type="entry name" value="PyrdxlKinase"/>
</dbReference>
<dbReference type="InterPro" id="IPR023685">
    <property type="entry name" value="Pyridoxal_kinase_PdxY"/>
</dbReference>
<dbReference type="InterPro" id="IPR029056">
    <property type="entry name" value="Ribokinase-like"/>
</dbReference>
<dbReference type="NCBIfam" id="NF004398">
    <property type="entry name" value="PRK05756.1"/>
    <property type="match status" value="1"/>
</dbReference>
<dbReference type="NCBIfam" id="TIGR00687">
    <property type="entry name" value="pyridox_kin"/>
    <property type="match status" value="1"/>
</dbReference>
<dbReference type="PANTHER" id="PTHR10534">
    <property type="entry name" value="PYRIDOXAL KINASE"/>
    <property type="match status" value="1"/>
</dbReference>
<dbReference type="PANTHER" id="PTHR10534:SF2">
    <property type="entry name" value="PYRIDOXAL KINASE"/>
    <property type="match status" value="1"/>
</dbReference>
<dbReference type="Pfam" id="PF08543">
    <property type="entry name" value="Phos_pyr_kin"/>
    <property type="match status" value="1"/>
</dbReference>
<dbReference type="SUPFAM" id="SSF53613">
    <property type="entry name" value="Ribokinase-like"/>
    <property type="match status" value="1"/>
</dbReference>
<name>PDXY_ALIF1</name>
<keyword id="KW-0067">ATP-binding</keyword>
<keyword id="KW-0418">Kinase</keyword>
<keyword id="KW-0460">Magnesium</keyword>
<keyword id="KW-0547">Nucleotide-binding</keyword>
<keyword id="KW-1185">Reference proteome</keyword>
<keyword id="KW-0808">Transferase</keyword>
<protein>
    <recommendedName>
        <fullName evidence="1">Pyridoxal kinase PdxY</fullName>
        <shortName evidence="1">PL kinase</shortName>
        <ecNumber evidence="1">2.7.1.35</ecNumber>
    </recommendedName>
</protein>
<feature type="chain" id="PRO_0000269834" description="Pyridoxal kinase PdxY">
    <location>
        <begin position="1"/>
        <end position="289"/>
    </location>
</feature>
<feature type="binding site" evidence="1">
    <location>
        <position position="9"/>
    </location>
    <ligand>
        <name>substrate</name>
    </ligand>
</feature>
<feature type="binding site" evidence="1">
    <location>
        <begin position="44"/>
        <end position="45"/>
    </location>
    <ligand>
        <name>substrate</name>
    </ligand>
</feature>
<feature type="binding site" evidence="1">
    <location>
        <position position="112"/>
    </location>
    <ligand>
        <name>ATP</name>
        <dbReference type="ChEBI" id="CHEBI:30616"/>
    </ligand>
</feature>
<feature type="binding site" evidence="1">
    <location>
        <position position="144"/>
    </location>
    <ligand>
        <name>ATP</name>
        <dbReference type="ChEBI" id="CHEBI:30616"/>
    </ligand>
</feature>
<feature type="binding site" evidence="1">
    <location>
        <position position="149"/>
    </location>
    <ligand>
        <name>ATP</name>
        <dbReference type="ChEBI" id="CHEBI:30616"/>
    </ligand>
</feature>
<feature type="binding site" evidence="1">
    <location>
        <position position="182"/>
    </location>
    <ligand>
        <name>ATP</name>
        <dbReference type="ChEBI" id="CHEBI:30616"/>
    </ligand>
</feature>
<feature type="binding site" evidence="1">
    <location>
        <position position="225"/>
    </location>
    <ligand>
        <name>substrate</name>
    </ligand>
</feature>
<accession>Q5E345</accession>
<organism>
    <name type="scientific">Aliivibrio fischeri (strain ATCC 700601 / ES114)</name>
    <name type="common">Vibrio fischeri</name>
    <dbReference type="NCBI Taxonomy" id="312309"/>
    <lineage>
        <taxon>Bacteria</taxon>
        <taxon>Pseudomonadati</taxon>
        <taxon>Pseudomonadota</taxon>
        <taxon>Gammaproteobacteria</taxon>
        <taxon>Vibrionales</taxon>
        <taxon>Vibrionaceae</taxon>
        <taxon>Aliivibrio</taxon>
    </lineage>
</organism>
<gene>
    <name evidence="1" type="primary">pdxY</name>
    <name type="ordered locus">VF_2056</name>
</gene>
<comment type="function">
    <text evidence="1">Pyridoxal kinase involved in the salvage pathway of pyridoxal 5'-phosphate (PLP). Catalyzes the phosphorylation of pyridoxal to PLP.</text>
</comment>
<comment type="catalytic activity">
    <reaction evidence="1">
        <text>pyridoxal + ATP = pyridoxal 5'-phosphate + ADP + H(+)</text>
        <dbReference type="Rhea" id="RHEA:10224"/>
        <dbReference type="ChEBI" id="CHEBI:15378"/>
        <dbReference type="ChEBI" id="CHEBI:17310"/>
        <dbReference type="ChEBI" id="CHEBI:30616"/>
        <dbReference type="ChEBI" id="CHEBI:456216"/>
        <dbReference type="ChEBI" id="CHEBI:597326"/>
        <dbReference type="EC" id="2.7.1.35"/>
    </reaction>
</comment>
<comment type="cofactor">
    <cofactor evidence="1">
        <name>Mg(2+)</name>
        <dbReference type="ChEBI" id="CHEBI:18420"/>
    </cofactor>
</comment>
<comment type="pathway">
    <text evidence="1">Cofactor metabolism; pyridoxal 5'-phosphate salvage; pyridoxal 5'-phosphate from pyridoxal: step 1/1.</text>
</comment>
<comment type="subunit">
    <text evidence="1">Homodimer.</text>
</comment>
<comment type="similarity">
    <text evidence="1">Belongs to the pyridoxine kinase family. PdxY subfamily.</text>
</comment>
<proteinExistence type="inferred from homology"/>
<evidence type="ECO:0000255" key="1">
    <source>
        <dbReference type="HAMAP-Rule" id="MF_01639"/>
    </source>
</evidence>
<sequence length="289" mass="31510">MKRILSIQSHVVFGCAGNSAAVFPMRRMGMEVWPINTVQFSNHTQYQQGWKGIAMPAGHISELVDGLSAIEATQVCDAVLSGYLGSAAQGQEIVTAVNKIKQDNPNAIYFCDPVMGHPEKGCIVAPEVETFFKESALSSADIIAPNLLELESLTGMTINTLDQVIEANNQLLEKGVKMVVVKHLSRAGIQKDRFEMLLTTEDGSYHVSRPLYDFDAKRQPVGAGDLISGVMLANLMAGYSPIDAFERTNAAVDSVMQETFNRGAYELQLIASQERFNAPEIIVKAEKVA</sequence>
<reference key="1">
    <citation type="journal article" date="2005" name="Proc. Natl. Acad. Sci. U.S.A.">
        <title>Complete genome sequence of Vibrio fischeri: a symbiotic bacterium with pathogenic congeners.</title>
        <authorList>
            <person name="Ruby E.G."/>
            <person name="Urbanowski M."/>
            <person name="Campbell J."/>
            <person name="Dunn A."/>
            <person name="Faini M."/>
            <person name="Gunsalus R."/>
            <person name="Lostroh P."/>
            <person name="Lupp C."/>
            <person name="McCann J."/>
            <person name="Millikan D."/>
            <person name="Schaefer A."/>
            <person name="Stabb E."/>
            <person name="Stevens A."/>
            <person name="Visick K."/>
            <person name="Whistler C."/>
            <person name="Greenberg E.P."/>
        </authorList>
    </citation>
    <scope>NUCLEOTIDE SEQUENCE [LARGE SCALE GENOMIC DNA]</scope>
    <source>
        <strain>ATCC 700601 / ES114</strain>
    </source>
</reference>